<gene>
    <name evidence="1" type="primary">rplY</name>
    <name evidence="1" type="synonym">ctc</name>
    <name type="ordered locus">Pnec_1626</name>
</gene>
<accession>B1XS65</accession>
<dbReference type="EMBL" id="CP001010">
    <property type="protein sequence ID" value="ACB44700.1"/>
    <property type="molecule type" value="Genomic_DNA"/>
</dbReference>
<dbReference type="SMR" id="B1XS65"/>
<dbReference type="STRING" id="452638.Pnec_1626"/>
<dbReference type="KEGG" id="pne:Pnec_1626"/>
<dbReference type="eggNOG" id="COG1825">
    <property type="taxonomic scope" value="Bacteria"/>
</dbReference>
<dbReference type="HOGENOM" id="CLU_075939_0_1_4"/>
<dbReference type="OrthoDB" id="9806411at2"/>
<dbReference type="GO" id="GO:0022625">
    <property type="term" value="C:cytosolic large ribosomal subunit"/>
    <property type="evidence" value="ECO:0007669"/>
    <property type="project" value="TreeGrafter"/>
</dbReference>
<dbReference type="GO" id="GO:0008097">
    <property type="term" value="F:5S rRNA binding"/>
    <property type="evidence" value="ECO:0007669"/>
    <property type="project" value="InterPro"/>
</dbReference>
<dbReference type="GO" id="GO:0003735">
    <property type="term" value="F:structural constituent of ribosome"/>
    <property type="evidence" value="ECO:0007669"/>
    <property type="project" value="InterPro"/>
</dbReference>
<dbReference type="GO" id="GO:0006412">
    <property type="term" value="P:translation"/>
    <property type="evidence" value="ECO:0007669"/>
    <property type="project" value="UniProtKB-UniRule"/>
</dbReference>
<dbReference type="CDD" id="cd00495">
    <property type="entry name" value="Ribosomal_L25_TL5_CTC"/>
    <property type="match status" value="1"/>
</dbReference>
<dbReference type="Gene3D" id="2.170.120.20">
    <property type="entry name" value="Ribosomal protein L25, beta domain"/>
    <property type="match status" value="1"/>
</dbReference>
<dbReference type="Gene3D" id="2.40.240.10">
    <property type="entry name" value="Ribosomal Protein L25, Chain P"/>
    <property type="match status" value="1"/>
</dbReference>
<dbReference type="HAMAP" id="MF_01336">
    <property type="entry name" value="Ribosomal_bL25"/>
    <property type="match status" value="1"/>
</dbReference>
<dbReference type="HAMAP" id="MF_01334">
    <property type="entry name" value="Ribosomal_bL25_CTC"/>
    <property type="match status" value="1"/>
</dbReference>
<dbReference type="InterPro" id="IPR020056">
    <property type="entry name" value="Rbsml_bL25/Gln-tRNA_synth_N"/>
</dbReference>
<dbReference type="InterPro" id="IPR011035">
    <property type="entry name" value="Ribosomal_bL25/Gln-tRNA_synth"/>
</dbReference>
<dbReference type="InterPro" id="IPR020057">
    <property type="entry name" value="Ribosomal_bL25_b-dom"/>
</dbReference>
<dbReference type="InterPro" id="IPR037121">
    <property type="entry name" value="Ribosomal_bL25_C"/>
</dbReference>
<dbReference type="InterPro" id="IPR001021">
    <property type="entry name" value="Ribosomal_bL25_long"/>
</dbReference>
<dbReference type="InterPro" id="IPR020055">
    <property type="entry name" value="Ribosomal_bL25_short"/>
</dbReference>
<dbReference type="InterPro" id="IPR029751">
    <property type="entry name" value="Ribosomal_L25_dom"/>
</dbReference>
<dbReference type="InterPro" id="IPR020930">
    <property type="entry name" value="Ribosomal_uL5_bac-type"/>
</dbReference>
<dbReference type="NCBIfam" id="TIGR00731">
    <property type="entry name" value="bL25_bact_ctc"/>
    <property type="match status" value="1"/>
</dbReference>
<dbReference type="NCBIfam" id="NF004128">
    <property type="entry name" value="PRK05618.1-2"/>
    <property type="match status" value="1"/>
</dbReference>
<dbReference type="NCBIfam" id="NF004130">
    <property type="entry name" value="PRK05618.1-5"/>
    <property type="match status" value="1"/>
</dbReference>
<dbReference type="NCBIfam" id="NF004612">
    <property type="entry name" value="PRK05943.1"/>
    <property type="match status" value="1"/>
</dbReference>
<dbReference type="PANTHER" id="PTHR33284">
    <property type="entry name" value="RIBOSOMAL PROTEIN L25/GLN-TRNA SYNTHETASE, ANTI-CODON-BINDING DOMAIN-CONTAINING PROTEIN"/>
    <property type="match status" value="1"/>
</dbReference>
<dbReference type="PANTHER" id="PTHR33284:SF1">
    <property type="entry name" value="RIBOSOMAL PROTEIN L25_GLN-TRNA SYNTHETASE, ANTI-CODON-BINDING DOMAIN-CONTAINING PROTEIN"/>
    <property type="match status" value="1"/>
</dbReference>
<dbReference type="Pfam" id="PF01386">
    <property type="entry name" value="Ribosomal_L25p"/>
    <property type="match status" value="1"/>
</dbReference>
<dbReference type="Pfam" id="PF14693">
    <property type="entry name" value="Ribosomal_TL5_C"/>
    <property type="match status" value="1"/>
</dbReference>
<dbReference type="SUPFAM" id="SSF50715">
    <property type="entry name" value="Ribosomal protein L25-like"/>
    <property type="match status" value="1"/>
</dbReference>
<sequence>MKVVAFERSVQGTSASRRLRNSGKTPGIVYGSKDPALVIELDHNALFHALRKEAFHSSILDLEIGGKTQKVLLRDYQMHPFKPLVLHIDFQRVSATKKVHMRVPLHFTNADTSAAVKLQGAVISHIATELEVSYLPADLPEFIEVDLAKIEVGHGIHAKDIALPKGVTLILHVEQENPVLANARIPAVKAAEPTDTPAAPAATAPAADATKVII</sequence>
<evidence type="ECO:0000255" key="1">
    <source>
        <dbReference type="HAMAP-Rule" id="MF_01334"/>
    </source>
</evidence>
<evidence type="ECO:0000305" key="2"/>
<comment type="function">
    <text evidence="1">This is one of the proteins that binds to the 5S RNA in the ribosome where it forms part of the central protuberance.</text>
</comment>
<comment type="subunit">
    <text evidence="1">Part of the 50S ribosomal subunit; part of the 5S rRNA/L5/L18/L25 subcomplex. Contacts the 5S rRNA. Binds to the 5S rRNA independently of L5 and L18.</text>
</comment>
<comment type="similarity">
    <text evidence="1">Belongs to the bacterial ribosomal protein bL25 family. CTC subfamily.</text>
</comment>
<name>RL25_POLNS</name>
<reference key="1">
    <citation type="journal article" date="2013" name="Proc. Natl. Acad. Sci. U.S.A.">
        <title>Polynucleobacter necessarius, a model for genome reduction in both free-living and symbiotic bacteria.</title>
        <authorList>
            <person name="Boscaro V."/>
            <person name="Felletti M."/>
            <person name="Vannini C."/>
            <person name="Ackerman M.S."/>
            <person name="Chain P.S."/>
            <person name="Malfatti S."/>
            <person name="Vergez L.M."/>
            <person name="Shin M."/>
            <person name="Doak T.G."/>
            <person name="Lynch M."/>
            <person name="Petroni G."/>
        </authorList>
    </citation>
    <scope>NUCLEOTIDE SEQUENCE [LARGE SCALE GENOMIC DNA]</scope>
    <source>
        <strain>STIR1</strain>
    </source>
</reference>
<protein>
    <recommendedName>
        <fullName evidence="1">Large ribosomal subunit protein bL25</fullName>
    </recommendedName>
    <alternativeName>
        <fullName evidence="2">50S ribosomal protein L25</fullName>
    </alternativeName>
    <alternativeName>
        <fullName evidence="1">General stress protein CTC</fullName>
    </alternativeName>
</protein>
<keyword id="KW-0687">Ribonucleoprotein</keyword>
<keyword id="KW-0689">Ribosomal protein</keyword>
<keyword id="KW-0694">RNA-binding</keyword>
<keyword id="KW-0699">rRNA-binding</keyword>
<feature type="chain" id="PRO_1000142544" description="Large ribosomal subunit protein bL25">
    <location>
        <begin position="1"/>
        <end position="214"/>
    </location>
</feature>
<organism>
    <name type="scientific">Polynucleobacter necessarius subsp. necessarius (strain STIR1)</name>
    <dbReference type="NCBI Taxonomy" id="452638"/>
    <lineage>
        <taxon>Bacteria</taxon>
        <taxon>Pseudomonadati</taxon>
        <taxon>Pseudomonadota</taxon>
        <taxon>Betaproteobacteria</taxon>
        <taxon>Burkholderiales</taxon>
        <taxon>Burkholderiaceae</taxon>
        <taxon>Polynucleobacter</taxon>
    </lineage>
</organism>
<proteinExistence type="inferred from homology"/>